<dbReference type="EC" id="3.4.23.24" evidence="8 9"/>
<dbReference type="EMBL" id="Z30191">
    <property type="protein sequence ID" value="CAA82923.1"/>
    <property type="molecule type" value="Genomic_DNA"/>
</dbReference>
<dbReference type="EMBL" id="CP017628">
    <property type="protein sequence ID" value="AOW30234.1"/>
    <property type="molecule type" value="Genomic_DNA"/>
</dbReference>
<dbReference type="PIR" id="S49056">
    <property type="entry name" value="S42072"/>
</dbReference>
<dbReference type="RefSeq" id="XP_719147.1">
    <property type="nucleotide sequence ID" value="XM_714054.1"/>
</dbReference>
<dbReference type="PDB" id="2QZX">
    <property type="method" value="X-ray"/>
    <property type="resolution" value="2.50 A"/>
    <property type="chains" value="A/B=77-418"/>
</dbReference>
<dbReference type="PDBsum" id="2QZX"/>
<dbReference type="SMR" id="P43094"/>
<dbReference type="STRING" id="237561.P43094"/>
<dbReference type="ChEMBL" id="CHEMBL6019"/>
<dbReference type="MEROPS" id="A01.063"/>
<dbReference type="EnsemblFungi" id="C6_03030W_A-T">
    <property type="protein sequence ID" value="C6_03030W_A-T-p1"/>
    <property type="gene ID" value="C6_03030W_A"/>
</dbReference>
<dbReference type="GeneID" id="3639268"/>
<dbReference type="KEGG" id="cal:CAALFM_C603030WA"/>
<dbReference type="CGD" id="CAL0000193807">
    <property type="gene designation" value="SAP5"/>
</dbReference>
<dbReference type="VEuPathDB" id="FungiDB:C6_03030W_A"/>
<dbReference type="eggNOG" id="KOG1339">
    <property type="taxonomic scope" value="Eukaryota"/>
</dbReference>
<dbReference type="HOGENOM" id="CLU_013253_9_1_1"/>
<dbReference type="InParanoid" id="P43094"/>
<dbReference type="OMA" id="NESETWI"/>
<dbReference type="OrthoDB" id="771136at2759"/>
<dbReference type="BRENDA" id="3.4.23.24">
    <property type="organism ID" value="1096"/>
</dbReference>
<dbReference type="EvolutionaryTrace" id="P43094"/>
<dbReference type="PHI-base" id="PHI:126"/>
<dbReference type="PHI-base" id="PHI:6787"/>
<dbReference type="PHI-base" id="PHI:6793"/>
<dbReference type="PHI-base" id="PHI:6808"/>
<dbReference type="PHI-base" id="PHI:6815"/>
<dbReference type="PRO" id="PR:P43094"/>
<dbReference type="Proteomes" id="UP000000559">
    <property type="component" value="Chromosome 6"/>
</dbReference>
<dbReference type="GO" id="GO:0005576">
    <property type="term" value="C:extracellular region"/>
    <property type="evidence" value="ECO:0000314"/>
    <property type="project" value="CGD"/>
</dbReference>
<dbReference type="GO" id="GO:0062040">
    <property type="term" value="C:fungal biofilm matrix"/>
    <property type="evidence" value="ECO:0000314"/>
    <property type="project" value="CGD"/>
</dbReference>
<dbReference type="GO" id="GO:0009277">
    <property type="term" value="C:fungal-type cell wall"/>
    <property type="evidence" value="ECO:0000318"/>
    <property type="project" value="GO_Central"/>
</dbReference>
<dbReference type="GO" id="GO:0004190">
    <property type="term" value="F:aspartic-type endopeptidase activity"/>
    <property type="evidence" value="ECO:0000314"/>
    <property type="project" value="CGD"/>
</dbReference>
<dbReference type="GO" id="GO:0046872">
    <property type="term" value="F:metal ion binding"/>
    <property type="evidence" value="ECO:0007669"/>
    <property type="project" value="UniProtKB-KW"/>
</dbReference>
<dbReference type="GO" id="GO:0031505">
    <property type="term" value="P:fungal-type cell wall organization"/>
    <property type="evidence" value="ECO:0000318"/>
    <property type="project" value="GO_Central"/>
</dbReference>
<dbReference type="GO" id="GO:0006508">
    <property type="term" value="P:proteolysis"/>
    <property type="evidence" value="ECO:0000314"/>
    <property type="project" value="CGD"/>
</dbReference>
<dbReference type="GO" id="GO:0044010">
    <property type="term" value="P:single-species biofilm formation"/>
    <property type="evidence" value="ECO:0000315"/>
    <property type="project" value="CGD"/>
</dbReference>
<dbReference type="CDD" id="cd05474">
    <property type="entry name" value="SAP_like"/>
    <property type="match status" value="1"/>
</dbReference>
<dbReference type="FunFam" id="2.40.70.10:FF:000011">
    <property type="entry name" value="Aspartic protease"/>
    <property type="match status" value="1"/>
</dbReference>
<dbReference type="FunFam" id="2.40.70.10:FF:000023">
    <property type="entry name" value="Aspartic protease"/>
    <property type="match status" value="1"/>
</dbReference>
<dbReference type="Gene3D" id="2.40.70.10">
    <property type="entry name" value="Acid Proteases"/>
    <property type="match status" value="2"/>
</dbReference>
<dbReference type="InterPro" id="IPR001461">
    <property type="entry name" value="Aspartic_peptidase_A1"/>
</dbReference>
<dbReference type="InterPro" id="IPR001969">
    <property type="entry name" value="Aspartic_peptidase_AS"/>
</dbReference>
<dbReference type="InterPro" id="IPR033121">
    <property type="entry name" value="PEPTIDASE_A1"/>
</dbReference>
<dbReference type="InterPro" id="IPR021109">
    <property type="entry name" value="Peptidase_aspartic_dom_sf"/>
</dbReference>
<dbReference type="InterPro" id="IPR033876">
    <property type="entry name" value="SAP-like"/>
</dbReference>
<dbReference type="PANTHER" id="PTHR47966:SF65">
    <property type="entry name" value="ASPARTIC-TYPE ENDOPEPTIDASE"/>
    <property type="match status" value="1"/>
</dbReference>
<dbReference type="PANTHER" id="PTHR47966">
    <property type="entry name" value="BETA-SITE APP-CLEAVING ENZYME, ISOFORM A-RELATED"/>
    <property type="match status" value="1"/>
</dbReference>
<dbReference type="Pfam" id="PF00026">
    <property type="entry name" value="Asp"/>
    <property type="match status" value="1"/>
</dbReference>
<dbReference type="PRINTS" id="PR00792">
    <property type="entry name" value="PEPSIN"/>
</dbReference>
<dbReference type="SUPFAM" id="SSF50630">
    <property type="entry name" value="Acid proteases"/>
    <property type="match status" value="1"/>
</dbReference>
<dbReference type="PROSITE" id="PS00141">
    <property type="entry name" value="ASP_PROTEASE"/>
    <property type="match status" value="2"/>
</dbReference>
<dbReference type="PROSITE" id="PS51767">
    <property type="entry name" value="PEPTIDASE_A1"/>
    <property type="match status" value="1"/>
</dbReference>
<evidence type="ECO:0000250" key="1">
    <source>
        <dbReference type="UniProtKB" id="P0CY27"/>
    </source>
</evidence>
<evidence type="ECO:0000250" key="2">
    <source>
        <dbReference type="UniProtKB" id="P0CY29"/>
    </source>
</evidence>
<evidence type="ECO:0000255" key="3"/>
<evidence type="ECO:0000255" key="4">
    <source>
        <dbReference type="PROSITE-ProRule" id="PRU01103"/>
    </source>
</evidence>
<evidence type="ECO:0000255" key="5">
    <source>
        <dbReference type="PROSITE-ProRule" id="PRU10094"/>
    </source>
</evidence>
<evidence type="ECO:0000269" key="6">
    <source>
    </source>
</evidence>
<evidence type="ECO:0000269" key="7">
    <source>
    </source>
</evidence>
<evidence type="ECO:0000269" key="8">
    <source>
    </source>
</evidence>
<evidence type="ECO:0000269" key="9">
    <source>
    </source>
</evidence>
<evidence type="ECO:0000269" key="10">
    <source>
    </source>
</evidence>
<evidence type="ECO:0000269" key="11">
    <source>
    </source>
</evidence>
<evidence type="ECO:0000269" key="12">
    <source>
    </source>
</evidence>
<evidence type="ECO:0000303" key="13">
    <source>
    </source>
</evidence>
<evidence type="ECO:0000305" key="14"/>
<evidence type="ECO:0007744" key="15">
    <source>
        <dbReference type="PDB" id="2QZX"/>
    </source>
</evidence>
<evidence type="ECO:0007829" key="16">
    <source>
        <dbReference type="PDB" id="2QZX"/>
    </source>
</evidence>
<name>CARP5_CANAL</name>
<sequence length="418" mass="45649">MFLKNILSVLAFALLIDAAPVKRSPGFVTLDFNVKRSLVDPDDPTVEAKRSPLFLEFTPSEFPVDETGRDGDVDKRGPVAVTLHNEAITYTADITVGSDNQKLNVIVDTGSSDLWIPDSNVICIPKWRGDKGDFCKSAGSYSPASSRTSQNLNTRFDIKYGDGSYAKGKLYKDTVGIGGVSVRDQLFANVWSTSARKGILGIGFQSGEATEFDYDNLPISLRNQGIIGKAAYSLYLNSAEASTGQIIFGGIDKAKYSGSLVDLPITSEKKLTVGLRSVNVRGRNVDANTNVLLDSGTTISYFTRSIVRNILYAIGAQMKFDSAGNKVYVADCKTSGTIDFQFGNNLKISVPVSEFLFQTYYTSGKPFPKCEVRIRESEDNILGDNFLRSAYVVYNLDDKKISMAPVKYTSESDIVAIN</sequence>
<accession>P43094</accession>
<accession>A0A1D8PQ36</accession>
<accession>Q5ABW5</accession>
<protein>
    <recommendedName>
        <fullName evidence="13">Secreted aspartic protease 5</fullName>
        <shortName evidence="14">ACP 5</shortName>
        <shortName evidence="14">Aspartate protease 5</shortName>
        <ecNumber evidence="8 9">3.4.23.24</ecNumber>
    </recommendedName>
    <alternativeName>
        <fullName evidence="14">Candidapepsin-5</fullName>
    </alternativeName>
</protein>
<comment type="function">
    <text evidence="6 8 12">Secreted aspartic peptidases (SAPs) are a group of ten acidic hydrolases considered as key virulence factors (PubMed:11478679, PubMed:18384081, PubMed:23927842). These enzymes supply the fungus with nutrient amino acids as well as are able to degrade the selected host's proteins involved in the immune defense (PubMed:11478679, PubMed:23927842). Moreover, acts toward human hemoglobin though limited proteolysis to generate a variety of antimicrobial hemocidins, enabling to compete with the other microorganisms of the same physiological niche using the microbicidal peptides generated from the host protein (PubMed:23927842).</text>
</comment>
<comment type="catalytic activity">
    <reaction evidence="8 9">
        <text>Preferential cleavage at the carboxyl of hydrophobic amino acids, but fails to cleave 15-Leu-|-Tyr-16, 16-Tyr-|-Leu-17 and 24-Phe-|-Phe-25 of insulin B chain. Activates trypsinogen, and degrades keratin.</text>
        <dbReference type="EC" id="3.4.23.24"/>
    </reaction>
</comment>
<comment type="activity regulation">
    <text evidence="10">Inhibited by pepstatin A analogs.</text>
</comment>
<comment type="biophysicochemical properties">
    <phDependence>
        <text evidence="9">Optimum pH is 5.0.</text>
    </phDependence>
</comment>
<comment type="subcellular location">
    <subcellularLocation>
        <location evidence="8">Secreted</location>
    </subcellularLocation>
</comment>
<comment type="induction">
    <text evidence="7 11">Expressed during development of germ tubes, pseudohyphae and true hyphae (PubMed:23484407). Induced during host infection (PubMed:15731084).</text>
</comment>
<comment type="similarity">
    <text evidence="14">Belongs to the peptidase A1 family.</text>
</comment>
<organism>
    <name type="scientific">Candida albicans (strain SC5314 / ATCC MYA-2876)</name>
    <name type="common">Yeast</name>
    <dbReference type="NCBI Taxonomy" id="237561"/>
    <lineage>
        <taxon>Eukaryota</taxon>
        <taxon>Fungi</taxon>
        <taxon>Dikarya</taxon>
        <taxon>Ascomycota</taxon>
        <taxon>Saccharomycotina</taxon>
        <taxon>Pichiomycetes</taxon>
        <taxon>Debaryomycetaceae</taxon>
        <taxon>Candida/Lodderomyces clade</taxon>
        <taxon>Candida</taxon>
    </lineage>
</organism>
<reference key="1">
    <citation type="journal article" date="1994" name="Mol. Microbiol.">
        <title>Multiplicity of genes encoding secreted aspartic proteinases in Candida species.</title>
        <authorList>
            <person name="Monod M."/>
            <person name="Togni G."/>
            <person name="Hube B."/>
            <person name="Sanglard D."/>
        </authorList>
    </citation>
    <scope>NUCLEOTIDE SEQUENCE [GENOMIC DNA]</scope>
    <source>
        <strain>C74</strain>
    </source>
</reference>
<reference key="2">
    <citation type="journal article" date="2004" name="Proc. Natl. Acad. Sci. U.S.A.">
        <title>The diploid genome sequence of Candida albicans.</title>
        <authorList>
            <person name="Jones T."/>
            <person name="Federspiel N.A."/>
            <person name="Chibana H."/>
            <person name="Dungan J."/>
            <person name="Kalman S."/>
            <person name="Magee B.B."/>
            <person name="Newport G."/>
            <person name="Thorstenson Y.R."/>
            <person name="Agabian N."/>
            <person name="Magee P.T."/>
            <person name="Davis R.W."/>
            <person name="Scherer S."/>
        </authorList>
    </citation>
    <scope>NUCLEOTIDE SEQUENCE [LARGE SCALE GENOMIC DNA]</scope>
    <source>
        <strain>SC5314 / ATCC MYA-2876</strain>
    </source>
</reference>
<reference key="3">
    <citation type="journal article" date="2007" name="Genome Biol.">
        <title>Assembly of the Candida albicans genome into sixteen supercontigs aligned on the eight chromosomes.</title>
        <authorList>
            <person name="van het Hoog M."/>
            <person name="Rast T.J."/>
            <person name="Martchenko M."/>
            <person name="Grindle S."/>
            <person name="Dignard D."/>
            <person name="Hogues H."/>
            <person name="Cuomo C."/>
            <person name="Berriman M."/>
            <person name="Scherer S."/>
            <person name="Magee B.B."/>
            <person name="Whiteway M."/>
            <person name="Chibana H."/>
            <person name="Nantel A."/>
            <person name="Magee P.T."/>
        </authorList>
    </citation>
    <scope>GENOME REANNOTATION</scope>
    <source>
        <strain>SC5314 / ATCC MYA-2876</strain>
    </source>
</reference>
<reference key="4">
    <citation type="journal article" date="2013" name="Genome Biol.">
        <title>Assembly of a phased diploid Candida albicans genome facilitates allele-specific measurements and provides a simple model for repeat and indel structure.</title>
        <authorList>
            <person name="Muzzey D."/>
            <person name="Schwartz K."/>
            <person name="Weissman J.S."/>
            <person name="Sherlock G."/>
        </authorList>
    </citation>
    <scope>NUCLEOTIDE SEQUENCE [LARGE SCALE GENOMIC DNA]</scope>
    <scope>GENOME REANNOTATION</scope>
    <source>
        <strain>SC5314 / ATCC MYA-2876</strain>
    </source>
</reference>
<reference key="5">
    <citation type="journal article" date="2001" name="J. Med. Microbiol.">
        <title>Different isoforms of secreted aspartyl proteinases (Sap) are expressed by Candida albicans during oral and cutaneous candidosis in vivo.</title>
        <authorList>
            <person name="Schaller M."/>
            <person name="Januschke E."/>
            <person name="Schackert C."/>
            <person name="Woerle B."/>
            <person name="Korting H.C."/>
        </authorList>
    </citation>
    <scope>FUNCTION</scope>
</reference>
<reference key="6">
    <citation type="journal article" date="2005" name="Infect. Immun.">
        <title>Profile of Candida albicans-secreted aspartic proteinase elicited during vaginal infection.</title>
        <authorList>
            <person name="Taylor B.N."/>
            <person name="Staib P."/>
            <person name="Binder A."/>
            <person name="Biesemeier A."/>
            <person name="Sehnal M."/>
            <person name="Rollinghoff M."/>
            <person name="Morschhauser J."/>
            <person name="Schroppel K."/>
        </authorList>
    </citation>
    <scope>INDUCTION</scope>
</reference>
<reference key="7">
    <citation type="journal article" date="2011" name="J. Biochem.">
        <title>Comprehensive characterization of secreted aspartic proteases encoded by a virulence gene family in Candida albicans.</title>
        <authorList>
            <person name="Aoki W."/>
            <person name="Kitahara N."/>
            <person name="Miura N."/>
            <person name="Morisaka H."/>
            <person name="Yamamoto Y."/>
            <person name="Kuroda K."/>
            <person name="Ueda M."/>
        </authorList>
    </citation>
    <scope>CATALYTIC ACTIVITY</scope>
    <scope>BIOPHYSICOCHEMICAL PROPERTIES</scope>
</reference>
<reference key="8">
    <citation type="journal article" date="2012" name="Pol. J. Microbiol.">
        <title>In vitro study of secreted aspartyl proteinases Sap1 to Sap3 and Sap4 to Sap6 expression in Candida albicans pleomorphic forms.</title>
        <authorList>
            <person name="Staniszewska M."/>
            <person name="Bondaryk M."/>
            <person name="Siennicka K."/>
            <person name="Kurek A."/>
            <person name="Orlowski J."/>
            <person name="Schaller M."/>
            <person name="Kurzatkowski W."/>
        </authorList>
    </citation>
    <scope>INDUCTION</scope>
</reference>
<reference key="9">
    <citation type="journal article" date="2013" name="Biochem. Pharmacol.">
        <title>Design, synthesis, inhibition studies, and molecular modeling of pepstatin analogues addressing different secreted aspartic proteinases of Candida albicans.</title>
        <authorList>
            <person name="Cadicamo C.D."/>
            <person name="Mortier J."/>
            <person name="Wolber G."/>
            <person name="Hell M."/>
            <person name="Heinrich I.E."/>
            <person name="Michel D."/>
            <person name="Semlin L."/>
            <person name="Berger U."/>
            <person name="Korting H.C."/>
            <person name="Holtje H.D."/>
            <person name="Koksch B."/>
            <person name="Borelli C."/>
        </authorList>
    </citation>
    <scope>ACTIVITY REGULATION</scope>
</reference>
<reference key="10">
    <citation type="journal article" date="2013" name="Peptides">
        <title>Secreted aspartic peptidases of Candida albicans liberate bactericidal hemocidins from human hemoglobin.</title>
        <authorList>
            <person name="Bochenska O."/>
            <person name="Rapala-Kozik M."/>
            <person name="Wolak N."/>
            <person name="Bras G."/>
            <person name="Kozik A."/>
            <person name="Dubin A."/>
            <person name="Aoki W."/>
            <person name="Ueda M."/>
            <person name="Mak P."/>
        </authorList>
    </citation>
    <scope>FUNCTION</scope>
</reference>
<reference evidence="15" key="11">
    <citation type="journal article" date="2008" name="Proteins">
        <title>X-ray structures of Sap1 and Sap5: structural comparison of the secreted aspartic proteinases from Candida albicans.</title>
        <authorList>
            <person name="Borelli C."/>
            <person name="Ruge E."/>
            <person name="Lee J.H."/>
            <person name="Schaller M."/>
            <person name="Vogelsang A."/>
            <person name="Monod M."/>
            <person name="Korting H.C."/>
            <person name="Huber R."/>
            <person name="Maskos K."/>
        </authorList>
    </citation>
    <scope>X-RAY CRYSTALLOGRAPHY (2.50 ANGSTROMS) OF 77-418</scope>
    <scope>FUNCTION</scope>
    <scope>SUBCELLULAR LOCATION</scope>
    <scope>CATALYTIC ACTIVITY</scope>
</reference>
<keyword id="KW-0002">3D-structure</keyword>
<keyword id="KW-0064">Aspartyl protease</keyword>
<keyword id="KW-0165">Cleavage on pair of basic residues</keyword>
<keyword id="KW-1015">Disulfide bond</keyword>
<keyword id="KW-0378">Hydrolase</keyword>
<keyword id="KW-0479">Metal-binding</keyword>
<keyword id="KW-0645">Protease</keyword>
<keyword id="KW-1185">Reference proteome</keyword>
<keyword id="KW-0964">Secreted</keyword>
<keyword id="KW-0732">Signal</keyword>
<keyword id="KW-0843">Virulence</keyword>
<keyword id="KW-0862">Zinc</keyword>
<keyword id="KW-0865">Zymogen</keyword>
<gene>
    <name evidence="13" type="primary">SAP5</name>
    <name type="ordered locus">CAALFM_C603030WA</name>
    <name type="ORF">CaO19.13032</name>
    <name type="ORF">CaO19.5585</name>
</gene>
<feature type="signal peptide" evidence="3">
    <location>
        <begin position="1"/>
        <end position="18"/>
    </location>
</feature>
<feature type="propeptide" id="PRO_0000025856" description="Activation peptide" evidence="3">
    <location>
        <begin position="19"/>
        <end position="76"/>
    </location>
</feature>
<feature type="chain" id="PRO_0000025857" description="Secreted aspartic protease 5">
    <location>
        <begin position="77"/>
        <end position="418"/>
    </location>
</feature>
<feature type="domain" description="Peptidase A1" evidence="4">
    <location>
        <begin position="90"/>
        <end position="404"/>
    </location>
</feature>
<feature type="active site" evidence="5">
    <location>
        <position position="108"/>
    </location>
</feature>
<feature type="active site" evidence="5">
    <location>
        <position position="294"/>
    </location>
</feature>
<feature type="binding site" evidence="2">
    <location>
        <begin position="108"/>
        <end position="110"/>
    </location>
    <ligand>
        <name>pepstatin A</name>
        <dbReference type="ChEBI" id="CHEBI:190525"/>
        <note>inhibitor</note>
    </ligand>
</feature>
<feature type="binding site" evidence="2">
    <location>
        <begin position="161"/>
        <end position="162"/>
    </location>
    <ligand>
        <name>pepstatin A</name>
        <dbReference type="ChEBI" id="CHEBI:190525"/>
        <note>inhibitor</note>
    </ligand>
</feature>
<feature type="binding site" evidence="2">
    <location>
        <position position="268"/>
    </location>
    <ligand>
        <name>Zn(2+)</name>
        <dbReference type="ChEBI" id="CHEBI:29105"/>
    </ligand>
</feature>
<feature type="binding site" evidence="2">
    <location>
        <begin position="294"/>
        <end position="298"/>
    </location>
    <ligand>
        <name>pepstatin A</name>
        <dbReference type="ChEBI" id="CHEBI:190525"/>
        <note>inhibitor</note>
    </ligand>
</feature>
<feature type="disulfide bond" evidence="1">
    <location>
        <begin position="123"/>
        <end position="135"/>
    </location>
</feature>
<feature type="disulfide bond" evidence="1">
    <location>
        <begin position="332"/>
        <end position="370"/>
    </location>
</feature>
<feature type="strand" evidence="16">
    <location>
        <begin position="79"/>
        <end position="85"/>
    </location>
</feature>
<feature type="strand" evidence="16">
    <location>
        <begin position="90"/>
        <end position="96"/>
    </location>
</feature>
<feature type="turn" evidence="16">
    <location>
        <begin position="97"/>
        <end position="100"/>
    </location>
</feature>
<feature type="strand" evidence="16">
    <location>
        <begin position="101"/>
        <end position="108"/>
    </location>
</feature>
<feature type="strand" evidence="16">
    <location>
        <begin position="114"/>
        <end position="123"/>
    </location>
</feature>
<feature type="strand" evidence="16">
    <location>
        <begin position="127"/>
        <end position="129"/>
    </location>
</feature>
<feature type="helix" evidence="16">
    <location>
        <begin position="134"/>
        <end position="136"/>
    </location>
</feature>
<feature type="helix" evidence="16">
    <location>
        <begin position="143"/>
        <end position="145"/>
    </location>
</feature>
<feature type="strand" evidence="16">
    <location>
        <begin position="150"/>
        <end position="159"/>
    </location>
</feature>
<feature type="strand" evidence="16">
    <location>
        <begin position="165"/>
        <end position="177"/>
    </location>
</feature>
<feature type="strand" evidence="16">
    <location>
        <begin position="180"/>
        <end position="193"/>
    </location>
</feature>
<feature type="strand" evidence="16">
    <location>
        <begin position="195"/>
        <end position="197"/>
    </location>
</feature>
<feature type="strand" evidence="16">
    <location>
        <begin position="199"/>
        <end position="201"/>
    </location>
</feature>
<feature type="helix" evidence="16">
    <location>
        <begin position="205"/>
        <end position="207"/>
    </location>
</feature>
<feature type="strand" evidence="16">
    <location>
        <begin position="209"/>
        <end position="212"/>
    </location>
</feature>
<feature type="helix" evidence="16">
    <location>
        <begin position="217"/>
        <end position="223"/>
    </location>
</feature>
<feature type="strand" evidence="16">
    <location>
        <begin position="226"/>
        <end position="235"/>
    </location>
</feature>
<feature type="strand" evidence="16">
    <location>
        <begin position="242"/>
        <end position="248"/>
    </location>
</feature>
<feature type="strand" evidence="16">
    <location>
        <begin position="250"/>
        <end position="252"/>
    </location>
</feature>
<feature type="strand" evidence="16">
    <location>
        <begin position="255"/>
        <end position="258"/>
    </location>
</feature>
<feature type="strand" evidence="16">
    <location>
        <begin position="261"/>
        <end position="264"/>
    </location>
</feature>
<feature type="strand" evidence="16">
    <location>
        <begin position="268"/>
        <end position="270"/>
    </location>
</feature>
<feature type="strand" evidence="16">
    <location>
        <begin position="272"/>
        <end position="280"/>
    </location>
</feature>
<feature type="strand" evidence="16">
    <location>
        <begin position="283"/>
        <end position="293"/>
    </location>
</feature>
<feature type="strand" evidence="16">
    <location>
        <begin position="298"/>
        <end position="302"/>
    </location>
</feature>
<feature type="helix" evidence="16">
    <location>
        <begin position="304"/>
        <end position="314"/>
    </location>
</feature>
<feature type="strand" evidence="16">
    <location>
        <begin position="317"/>
        <end position="320"/>
    </location>
</feature>
<feature type="strand" evidence="16">
    <location>
        <begin position="326"/>
        <end position="330"/>
    </location>
</feature>
<feature type="strand" evidence="16">
    <location>
        <begin position="337"/>
        <end position="342"/>
    </location>
</feature>
<feature type="turn" evidence="16">
    <location>
        <begin position="343"/>
        <end position="345"/>
    </location>
</feature>
<feature type="strand" evidence="16">
    <location>
        <begin position="346"/>
        <end position="351"/>
    </location>
</feature>
<feature type="helix" evidence="16">
    <location>
        <begin position="352"/>
        <end position="355"/>
    </location>
</feature>
<feature type="strand" evidence="16">
    <location>
        <begin position="368"/>
        <end position="376"/>
    </location>
</feature>
<feature type="helix" evidence="16">
    <location>
        <begin position="384"/>
        <end position="387"/>
    </location>
</feature>
<feature type="strand" evidence="16">
    <location>
        <begin position="390"/>
        <end position="395"/>
    </location>
</feature>
<feature type="turn" evidence="16">
    <location>
        <begin position="396"/>
        <end position="399"/>
    </location>
</feature>
<feature type="strand" evidence="16">
    <location>
        <begin position="400"/>
        <end position="406"/>
    </location>
</feature>
<feature type="strand" evidence="16">
    <location>
        <begin position="414"/>
        <end position="416"/>
    </location>
</feature>
<proteinExistence type="evidence at protein level"/>